<protein>
    <recommendedName>
        <fullName evidence="1">DNA-directed RNA polymerase subunit beta'</fullName>
        <shortName evidence="1">RNAP subunit beta'</shortName>
        <ecNumber evidence="1">2.7.7.6</ecNumber>
    </recommendedName>
    <alternativeName>
        <fullName evidence="1">RNA polymerase subunit beta'</fullName>
    </alternativeName>
    <alternativeName>
        <fullName evidence="1">Transcriptase subunit beta'</fullName>
    </alternativeName>
</protein>
<reference key="1">
    <citation type="journal article" date="2005" name="Genome Res.">
        <title>Genome sequence of Blochmannia pennsylvanicus indicates parallel evolutionary trends among bacterial mutualists of insects.</title>
        <authorList>
            <person name="Degnan P.H."/>
            <person name="Lazarus A.B."/>
            <person name="Wernegreen J.J."/>
        </authorList>
    </citation>
    <scope>NUCLEOTIDE SEQUENCE [LARGE SCALE GENOMIC DNA]</scope>
    <source>
        <strain>BPEN</strain>
    </source>
</reference>
<proteinExistence type="inferred from homology"/>
<feature type="chain" id="PRO_0000225515" description="DNA-directed RNA polymerase subunit beta'">
    <location>
        <begin position="1"/>
        <end position="1416"/>
    </location>
</feature>
<feature type="binding site" evidence="1">
    <location>
        <position position="71"/>
    </location>
    <ligand>
        <name>Zn(2+)</name>
        <dbReference type="ChEBI" id="CHEBI:29105"/>
        <label>1</label>
    </ligand>
</feature>
<feature type="binding site" evidence="1">
    <location>
        <position position="73"/>
    </location>
    <ligand>
        <name>Zn(2+)</name>
        <dbReference type="ChEBI" id="CHEBI:29105"/>
        <label>1</label>
    </ligand>
</feature>
<feature type="binding site" evidence="1">
    <location>
        <position position="86"/>
    </location>
    <ligand>
        <name>Zn(2+)</name>
        <dbReference type="ChEBI" id="CHEBI:29105"/>
        <label>1</label>
    </ligand>
</feature>
<feature type="binding site" evidence="1">
    <location>
        <position position="89"/>
    </location>
    <ligand>
        <name>Zn(2+)</name>
        <dbReference type="ChEBI" id="CHEBI:29105"/>
        <label>1</label>
    </ligand>
</feature>
<feature type="binding site" evidence="1">
    <location>
        <position position="461"/>
    </location>
    <ligand>
        <name>Mg(2+)</name>
        <dbReference type="ChEBI" id="CHEBI:18420"/>
    </ligand>
</feature>
<feature type="binding site" evidence="1">
    <location>
        <position position="463"/>
    </location>
    <ligand>
        <name>Mg(2+)</name>
        <dbReference type="ChEBI" id="CHEBI:18420"/>
    </ligand>
</feature>
<feature type="binding site" evidence="1">
    <location>
        <position position="465"/>
    </location>
    <ligand>
        <name>Mg(2+)</name>
        <dbReference type="ChEBI" id="CHEBI:18420"/>
    </ligand>
</feature>
<feature type="binding site" evidence="1">
    <location>
        <position position="815"/>
    </location>
    <ligand>
        <name>Zn(2+)</name>
        <dbReference type="ChEBI" id="CHEBI:29105"/>
        <label>2</label>
    </ligand>
</feature>
<feature type="binding site" evidence="1">
    <location>
        <position position="892"/>
    </location>
    <ligand>
        <name>Zn(2+)</name>
        <dbReference type="ChEBI" id="CHEBI:29105"/>
        <label>2</label>
    </ligand>
</feature>
<feature type="binding site" evidence="1">
    <location>
        <position position="899"/>
    </location>
    <ligand>
        <name>Zn(2+)</name>
        <dbReference type="ChEBI" id="CHEBI:29105"/>
        <label>2</label>
    </ligand>
</feature>
<feature type="binding site" evidence="1">
    <location>
        <position position="902"/>
    </location>
    <ligand>
        <name>Zn(2+)</name>
        <dbReference type="ChEBI" id="CHEBI:29105"/>
        <label>2</label>
    </ligand>
</feature>
<keyword id="KW-0240">DNA-directed RNA polymerase</keyword>
<keyword id="KW-0460">Magnesium</keyword>
<keyword id="KW-0479">Metal-binding</keyword>
<keyword id="KW-0548">Nucleotidyltransferase</keyword>
<keyword id="KW-1185">Reference proteome</keyword>
<keyword id="KW-0804">Transcription</keyword>
<keyword id="KW-0808">Transferase</keyword>
<keyword id="KW-0862">Zinc</keyword>
<evidence type="ECO:0000255" key="1">
    <source>
        <dbReference type="HAMAP-Rule" id="MF_01322"/>
    </source>
</evidence>
<name>RPOC_BLOPB</name>
<accession>Q492C0</accession>
<dbReference type="EC" id="2.7.7.6" evidence="1"/>
<dbReference type="EMBL" id="CP000016">
    <property type="protein sequence ID" value="AAZ41182.1"/>
    <property type="molecule type" value="Genomic_DNA"/>
</dbReference>
<dbReference type="RefSeq" id="WP_011283093.1">
    <property type="nucleotide sequence ID" value="NC_007292.1"/>
</dbReference>
<dbReference type="SMR" id="Q492C0"/>
<dbReference type="STRING" id="291272.BPEN_576"/>
<dbReference type="KEGG" id="bpn:BPEN_576"/>
<dbReference type="eggNOG" id="COG0086">
    <property type="taxonomic scope" value="Bacteria"/>
</dbReference>
<dbReference type="HOGENOM" id="CLU_000524_3_1_6"/>
<dbReference type="OrthoDB" id="9815296at2"/>
<dbReference type="Proteomes" id="UP000007794">
    <property type="component" value="Chromosome"/>
</dbReference>
<dbReference type="GO" id="GO:0000428">
    <property type="term" value="C:DNA-directed RNA polymerase complex"/>
    <property type="evidence" value="ECO:0007669"/>
    <property type="project" value="UniProtKB-KW"/>
</dbReference>
<dbReference type="GO" id="GO:0003677">
    <property type="term" value="F:DNA binding"/>
    <property type="evidence" value="ECO:0007669"/>
    <property type="project" value="UniProtKB-UniRule"/>
</dbReference>
<dbReference type="GO" id="GO:0003899">
    <property type="term" value="F:DNA-directed RNA polymerase activity"/>
    <property type="evidence" value="ECO:0007669"/>
    <property type="project" value="UniProtKB-UniRule"/>
</dbReference>
<dbReference type="GO" id="GO:0000287">
    <property type="term" value="F:magnesium ion binding"/>
    <property type="evidence" value="ECO:0007669"/>
    <property type="project" value="UniProtKB-UniRule"/>
</dbReference>
<dbReference type="GO" id="GO:0008270">
    <property type="term" value="F:zinc ion binding"/>
    <property type="evidence" value="ECO:0007669"/>
    <property type="project" value="UniProtKB-UniRule"/>
</dbReference>
<dbReference type="GO" id="GO:0006351">
    <property type="term" value="P:DNA-templated transcription"/>
    <property type="evidence" value="ECO:0007669"/>
    <property type="project" value="UniProtKB-UniRule"/>
</dbReference>
<dbReference type="CDD" id="cd02655">
    <property type="entry name" value="RNAP_beta'_C"/>
    <property type="match status" value="1"/>
</dbReference>
<dbReference type="CDD" id="cd01609">
    <property type="entry name" value="RNAP_beta'_N"/>
    <property type="match status" value="1"/>
</dbReference>
<dbReference type="FunFam" id="1.10.132.30:FF:000003">
    <property type="entry name" value="DNA-directed RNA polymerase subunit beta"/>
    <property type="match status" value="1"/>
</dbReference>
<dbReference type="FunFam" id="1.10.150.390:FF:000002">
    <property type="entry name" value="DNA-directed RNA polymerase subunit beta"/>
    <property type="match status" value="1"/>
</dbReference>
<dbReference type="FunFam" id="1.10.40.90:FF:000001">
    <property type="entry name" value="DNA-directed RNA polymerase subunit beta"/>
    <property type="match status" value="1"/>
</dbReference>
<dbReference type="FunFam" id="4.10.860.120:FF:000001">
    <property type="entry name" value="DNA-directed RNA polymerase subunit beta"/>
    <property type="match status" value="1"/>
</dbReference>
<dbReference type="Gene3D" id="1.10.132.30">
    <property type="match status" value="1"/>
</dbReference>
<dbReference type="Gene3D" id="1.10.150.390">
    <property type="match status" value="1"/>
</dbReference>
<dbReference type="Gene3D" id="1.10.1790.20">
    <property type="match status" value="1"/>
</dbReference>
<dbReference type="Gene3D" id="1.10.40.90">
    <property type="match status" value="1"/>
</dbReference>
<dbReference type="Gene3D" id="2.40.40.20">
    <property type="match status" value="1"/>
</dbReference>
<dbReference type="Gene3D" id="2.40.50.100">
    <property type="match status" value="3"/>
</dbReference>
<dbReference type="Gene3D" id="4.10.860.120">
    <property type="entry name" value="RNA polymerase II, clamp domain"/>
    <property type="match status" value="1"/>
</dbReference>
<dbReference type="Gene3D" id="1.10.274.100">
    <property type="entry name" value="RNA polymerase Rpb1, domain 3"/>
    <property type="match status" value="1"/>
</dbReference>
<dbReference type="HAMAP" id="MF_01322">
    <property type="entry name" value="RNApol_bact_RpoC"/>
    <property type="match status" value="1"/>
</dbReference>
<dbReference type="InterPro" id="IPR045867">
    <property type="entry name" value="DNA-dir_RpoC_beta_prime"/>
</dbReference>
<dbReference type="InterPro" id="IPR012754">
    <property type="entry name" value="DNA-dir_RpoC_beta_prime_bact"/>
</dbReference>
<dbReference type="InterPro" id="IPR000722">
    <property type="entry name" value="RNA_pol_asu"/>
</dbReference>
<dbReference type="InterPro" id="IPR006592">
    <property type="entry name" value="RNA_pol_N"/>
</dbReference>
<dbReference type="InterPro" id="IPR007080">
    <property type="entry name" value="RNA_pol_Rpb1_1"/>
</dbReference>
<dbReference type="InterPro" id="IPR007066">
    <property type="entry name" value="RNA_pol_Rpb1_3"/>
</dbReference>
<dbReference type="InterPro" id="IPR042102">
    <property type="entry name" value="RNA_pol_Rpb1_3_sf"/>
</dbReference>
<dbReference type="InterPro" id="IPR007083">
    <property type="entry name" value="RNA_pol_Rpb1_4"/>
</dbReference>
<dbReference type="InterPro" id="IPR007081">
    <property type="entry name" value="RNA_pol_Rpb1_5"/>
</dbReference>
<dbReference type="InterPro" id="IPR044893">
    <property type="entry name" value="RNA_pol_Rpb1_clamp_domain"/>
</dbReference>
<dbReference type="InterPro" id="IPR038120">
    <property type="entry name" value="Rpb1_funnel_sf"/>
</dbReference>
<dbReference type="NCBIfam" id="TIGR02386">
    <property type="entry name" value="rpoC_TIGR"/>
    <property type="match status" value="1"/>
</dbReference>
<dbReference type="PANTHER" id="PTHR19376">
    <property type="entry name" value="DNA-DIRECTED RNA POLYMERASE"/>
    <property type="match status" value="1"/>
</dbReference>
<dbReference type="PANTHER" id="PTHR19376:SF54">
    <property type="entry name" value="DNA-DIRECTED RNA POLYMERASE SUBUNIT BETA"/>
    <property type="match status" value="1"/>
</dbReference>
<dbReference type="Pfam" id="PF04997">
    <property type="entry name" value="RNA_pol_Rpb1_1"/>
    <property type="match status" value="1"/>
</dbReference>
<dbReference type="Pfam" id="PF00623">
    <property type="entry name" value="RNA_pol_Rpb1_2"/>
    <property type="match status" value="2"/>
</dbReference>
<dbReference type="Pfam" id="PF04983">
    <property type="entry name" value="RNA_pol_Rpb1_3"/>
    <property type="match status" value="1"/>
</dbReference>
<dbReference type="Pfam" id="PF05000">
    <property type="entry name" value="RNA_pol_Rpb1_4"/>
    <property type="match status" value="1"/>
</dbReference>
<dbReference type="Pfam" id="PF04998">
    <property type="entry name" value="RNA_pol_Rpb1_5"/>
    <property type="match status" value="1"/>
</dbReference>
<dbReference type="SMART" id="SM00663">
    <property type="entry name" value="RPOLA_N"/>
    <property type="match status" value="1"/>
</dbReference>
<dbReference type="SUPFAM" id="SSF64484">
    <property type="entry name" value="beta and beta-prime subunits of DNA dependent RNA-polymerase"/>
    <property type="match status" value="1"/>
</dbReference>
<gene>
    <name evidence="1" type="primary">rpoC</name>
    <name type="ordered locus">BPEN_576</name>
</gene>
<organism>
    <name type="scientific">Blochmanniella pennsylvanica (strain BPEN)</name>
    <dbReference type="NCBI Taxonomy" id="291272"/>
    <lineage>
        <taxon>Bacteria</taxon>
        <taxon>Pseudomonadati</taxon>
        <taxon>Pseudomonadota</taxon>
        <taxon>Gammaproteobacteria</taxon>
        <taxon>Enterobacterales</taxon>
        <taxon>Enterobacteriaceae</taxon>
        <taxon>ant endosymbionts</taxon>
        <taxon>Candidatus Blochmanniella</taxon>
    </lineage>
</organism>
<comment type="function">
    <text evidence="1">DNA-dependent RNA polymerase catalyzes the transcription of DNA into RNA using the four ribonucleoside triphosphates as substrates.</text>
</comment>
<comment type="catalytic activity">
    <reaction evidence="1">
        <text>RNA(n) + a ribonucleoside 5'-triphosphate = RNA(n+1) + diphosphate</text>
        <dbReference type="Rhea" id="RHEA:21248"/>
        <dbReference type="Rhea" id="RHEA-COMP:14527"/>
        <dbReference type="Rhea" id="RHEA-COMP:17342"/>
        <dbReference type="ChEBI" id="CHEBI:33019"/>
        <dbReference type="ChEBI" id="CHEBI:61557"/>
        <dbReference type="ChEBI" id="CHEBI:140395"/>
        <dbReference type="EC" id="2.7.7.6"/>
    </reaction>
</comment>
<comment type="cofactor">
    <cofactor evidence="1">
        <name>Mg(2+)</name>
        <dbReference type="ChEBI" id="CHEBI:18420"/>
    </cofactor>
    <text evidence="1">Binds 1 Mg(2+) ion per subunit.</text>
</comment>
<comment type="cofactor">
    <cofactor evidence="1">
        <name>Zn(2+)</name>
        <dbReference type="ChEBI" id="CHEBI:29105"/>
    </cofactor>
    <text evidence="1">Binds 2 Zn(2+) ions per subunit.</text>
</comment>
<comment type="subunit">
    <text evidence="1">The RNAP catalytic core consists of 2 alpha, 1 beta, 1 beta' and 1 omega subunit. When a sigma factor is associated with the core the holoenzyme is formed, which can initiate transcription.</text>
</comment>
<comment type="similarity">
    <text evidence="1">Belongs to the RNA polymerase beta' chain family.</text>
</comment>
<sequence>MKDLLRFFKIQHTQIEEFNAIKIALASPDMIRSWSFGEVKKPETINYRTFKPERDGLFCARIFGPIKDYECLCGKYKRLKHRGVVCEKCGVEVTQSKVRRERMGHIELASPTAHIWFLKSLPSRIGLLLDMPLRDIERVLYFESYVVVESGMTSLECRQVLTEEEYLDALEEFGDEFEAKMGAEAIQILLRNTNLKNECEYLREILEDSHSETKRKKITKRIKLIEAFIYSENKPEWMVLNVLPVLPPDLRPLVPLDGGRFATSDLNDLYRRVINRNNRLKRLLDLAAPEIIVRNEKRMLQEAVDALLDNGRRGRAITGSNKRPLKSLADMIKGKQGRFRQNLLGKRVDYSGRSVITVGPYLKLHQCGLPKKMALELFKPFIYGKLELQGFASTIKAAKKMVDREEAVVWDILDNVIREHPVMLNRAPTLHRLGIQAFEPVLIEGKAIQLHPLVCAAYNADFDGDQMAVHVPLTLEAQLEARALMMSTNNILSPANGEPIIVPSQDVVLGLYYMTRERSNAKGEGMVLTGPKEAECLYRLGLADLHARIKIRITEYEYDKNGEWSKKTNLVNSTIGRSILWMIVPKGLPFILVNQVLGKKAISTMLNNCYRLLGMKATVILADQIMYTGFAYAARSGASVGIDDMMIPSKKADIIDEAESEVVEIQEQFQTGLVTAGERYNKVIDIWAAANERVAQAMMDNLATETVMNRNGQLENQASFNNIFMMADSGARGSAAQIRQLAGMRGLMAKPDGSIIETPITANFREGLNVLQYFISTHGARKGLADTALKTANSGYLTRRLVDVAQDLVITQDDCDTFSGIVMSPVIEGGDVKEPLRERVLGRVLAEDILESNADTDSKVLIVRNTLLDEYWCDVLDEHSIDTVKVRSVVTCDTDFGVCSKCYGRDLARGQIVNKGEAIGVIAAQSIGEPGTQLTMRTFHIGGAASRSALESSIQIKNTGTVCLKNIKSVINGEGKLVVISRNTELKIIDQFSRTKESYKVPYGAVITKKNEEKVIHGEIVAYWDPHTMPVIAEVSGFIQFIDLIDGQSIVKQTDELTGLTSIVVLDTSERVSSAKDLRPTLKIVDINGYDIFIPGTDVPVQYFLPGRSVVQLVDGSRIICGDILARLPHESSGTKDITGGLPRVADLFEARRPKESAILAEISGTISFGKETKGKRRLMISPIEDGDVYEEMIPKWRHLNVFEGEYVDRGDIISDGPESPHDILRLRGVHAVTRYIVNEVQDVYRLQGVKINDKHIEVIVRQMLRKATVIRSGSSDFLVGEQVEYSRIKIANRKLENEGKVKISFIRNLLGITKASLATESFISAASFQETTRVLTESSVAGKRDELRGLKENVIVGRLIPAGTGYSYHQERVHHRHFSNKKETEKSVITNISSQITADEASANLTELLNATSPK</sequence>